<accession>P19330</accession>
<evidence type="ECO:0000250" key="1"/>
<evidence type="ECO:0000255" key="2"/>
<evidence type="ECO:0000305" key="3"/>
<name>ARC2_PHAVU</name>
<gene>
    <name type="primary">ARC2</name>
</gene>
<organism>
    <name type="scientific">Phaseolus vulgaris</name>
    <name type="common">Kidney bean</name>
    <name type="synonym">French bean</name>
    <dbReference type="NCBI Taxonomy" id="3885"/>
    <lineage>
        <taxon>Eukaryota</taxon>
        <taxon>Viridiplantae</taxon>
        <taxon>Streptophyta</taxon>
        <taxon>Embryophyta</taxon>
        <taxon>Tracheophyta</taxon>
        <taxon>Spermatophyta</taxon>
        <taxon>Magnoliopsida</taxon>
        <taxon>eudicotyledons</taxon>
        <taxon>Gunneridae</taxon>
        <taxon>Pentapetalae</taxon>
        <taxon>rosids</taxon>
        <taxon>fabids</taxon>
        <taxon>Fabales</taxon>
        <taxon>Fabaceae</taxon>
        <taxon>Papilionoideae</taxon>
        <taxon>50 kb inversion clade</taxon>
        <taxon>NPAAA clade</taxon>
        <taxon>indigoferoid/millettioid clade</taxon>
        <taxon>Phaseoleae</taxon>
        <taxon>Phaseolus</taxon>
    </lineage>
</organism>
<proteinExistence type="evidence at transcript level"/>
<comment type="function">
    <text>Seed storage. This carbohydrate-binding lectin has toxic effects on bean bruchid pests. Antibiosis properties of legume lectins are proposed to be due to the lysis of epithelial cells of the intestine by binding to the carbohydrate moieties of these proteins.</text>
</comment>
<comment type="similarity">
    <text evidence="3">Belongs to the leguminous lectin family.</text>
</comment>
<dbReference type="EMBL" id="M28470">
    <property type="protein sequence ID" value="AAA33754.1"/>
    <property type="molecule type" value="mRNA"/>
</dbReference>
<dbReference type="PIR" id="JQ0435">
    <property type="entry name" value="JQ0435"/>
</dbReference>
<dbReference type="SMR" id="P19330"/>
<dbReference type="GlyCosmos" id="P19330">
    <property type="glycosylation" value="2 sites, No reported glycans"/>
</dbReference>
<dbReference type="GO" id="GO:0030246">
    <property type="term" value="F:carbohydrate binding"/>
    <property type="evidence" value="ECO:0007669"/>
    <property type="project" value="UniProtKB-KW"/>
</dbReference>
<dbReference type="GO" id="GO:0045735">
    <property type="term" value="F:nutrient reservoir activity"/>
    <property type="evidence" value="ECO:0007669"/>
    <property type="project" value="UniProtKB-KW"/>
</dbReference>
<dbReference type="GO" id="GO:0090729">
    <property type="term" value="F:toxin activity"/>
    <property type="evidence" value="ECO:0007669"/>
    <property type="project" value="UniProtKB-KW"/>
</dbReference>
<dbReference type="GO" id="GO:0006952">
    <property type="term" value="P:defense response"/>
    <property type="evidence" value="ECO:0007669"/>
    <property type="project" value="UniProtKB-KW"/>
</dbReference>
<dbReference type="CDD" id="cd06899">
    <property type="entry name" value="lectin_legume_LecRK_Arcelin_ConA"/>
    <property type="match status" value="1"/>
</dbReference>
<dbReference type="Gene3D" id="2.60.120.200">
    <property type="match status" value="1"/>
</dbReference>
<dbReference type="InterPro" id="IPR013320">
    <property type="entry name" value="ConA-like_dom_sf"/>
</dbReference>
<dbReference type="InterPro" id="IPR016363">
    <property type="entry name" value="L-lectin"/>
</dbReference>
<dbReference type="InterPro" id="IPR000985">
    <property type="entry name" value="Lectin_LegA_CS"/>
</dbReference>
<dbReference type="InterPro" id="IPR019825">
    <property type="entry name" value="Lectin_legB_Mn/Ca_BS"/>
</dbReference>
<dbReference type="InterPro" id="IPR001220">
    <property type="entry name" value="Legume_lectin_dom"/>
</dbReference>
<dbReference type="InterPro" id="IPR050258">
    <property type="entry name" value="Leguminous_Lectin"/>
</dbReference>
<dbReference type="PANTHER" id="PTHR32401">
    <property type="entry name" value="CONCANAVALIN A-LIKE LECTIN FAMILY PROTEIN"/>
    <property type="match status" value="1"/>
</dbReference>
<dbReference type="PANTHER" id="PTHR32401:SF45">
    <property type="entry name" value="LECTIN"/>
    <property type="match status" value="1"/>
</dbReference>
<dbReference type="Pfam" id="PF00139">
    <property type="entry name" value="Lectin_legB"/>
    <property type="match status" value="1"/>
</dbReference>
<dbReference type="PIRSF" id="PIRSF002690">
    <property type="entry name" value="L-type_lectin_plant"/>
    <property type="match status" value="1"/>
</dbReference>
<dbReference type="SUPFAM" id="SSF49899">
    <property type="entry name" value="Concanavalin A-like lectins/glucanases"/>
    <property type="match status" value="1"/>
</dbReference>
<dbReference type="PROSITE" id="PS00308">
    <property type="entry name" value="LECTIN_LEGUME_ALPHA"/>
    <property type="match status" value="1"/>
</dbReference>
<dbReference type="PROSITE" id="PS00307">
    <property type="entry name" value="LECTIN_LEGUME_BETA"/>
    <property type="match status" value="1"/>
</dbReference>
<feature type="signal peptide">
    <location>
        <begin position="1"/>
        <end position="21"/>
    </location>
</feature>
<feature type="chain" id="PRO_0000017637" description="Arcelin-2">
    <location>
        <begin position="22"/>
        <end position="265"/>
    </location>
</feature>
<feature type="glycosylation site" description="N-linked (GlcNAc...) asparagine" evidence="3">
    <location>
        <position position="33"/>
    </location>
</feature>
<feature type="glycosylation site" description="N-linked (GlcNAc...) asparagine" evidence="2">
    <location>
        <position position="89"/>
    </location>
</feature>
<feature type="disulfide bond" evidence="1">
    <location>
        <begin position="165"/>
        <end position="201"/>
    </location>
</feature>
<sequence length="265" mass="29275">MASSNLLTLALFLVLLTHANSSNDASFNVETFNKTNLILQGDATVSSEGHLLLTNVKGNEEDSMGRAFYSAPIQINDRTIDNLASFSTNFTFRINAKNNENSAYGLAFALVPVGSRPKLKGRYLGLFNTANYDRDAHTVAVVFDTVSNRIEIDVNSIRPIATESCNFGHNNGEKAEVRITYYSPKNDLRVSLLYPSSEEKCHVSATVPLEKEVEDWVSVGFSATSGSKKETTETHNVLSWSFSSNFINFEGKKSERSNILLNKIL</sequence>
<protein>
    <recommendedName>
        <fullName>Arcelin-2</fullName>
    </recommendedName>
</protein>
<reference key="1">
    <citation type="journal article" date="1990" name="Gene">
        <title>Sequence analysis of arcelin 2, a lectin-like plant protein.</title>
        <authorList>
            <person name="John M.E."/>
            <person name="Long C.M."/>
        </authorList>
    </citation>
    <scope>NUCLEOTIDE SEQUENCE [MRNA]</scope>
</reference>
<keyword id="KW-1015">Disulfide bond</keyword>
<keyword id="KW-0325">Glycoprotein</keyword>
<keyword id="KW-0430">Lectin</keyword>
<keyword id="KW-0611">Plant defense</keyword>
<keyword id="KW-0708">Seed storage protein</keyword>
<keyword id="KW-0732">Signal</keyword>
<keyword id="KW-0758">Storage protein</keyword>
<keyword id="KW-0800">Toxin</keyword>